<protein>
    <recommendedName>
        <fullName evidence="1">Large ribosomal subunit protein uL5</fullName>
    </recommendedName>
    <alternativeName>
        <fullName evidence="2">50S ribosomal protein L5</fullName>
    </alternativeName>
</protein>
<sequence length="179" mass="19996">MARLKDYYQKELVAKLKTELGLDNIMEVPAIKKITLNMGVGDAAKDKKIMTFALNDLTAIAGQKPVVTKSKKSIAGFKIRDGWPIGAKVTLRGDRMYEFLDRLITIAIPRIRDFRGLSAKSFDGRGNYSLGMREQISFPEIDYDKVDSIRGLDISITTTAKNDDQGRALLKAFGFPFKS</sequence>
<dbReference type="EMBL" id="CP000608">
    <property type="protein sequence ID" value="ABO47422.1"/>
    <property type="molecule type" value="Genomic_DNA"/>
</dbReference>
<dbReference type="RefSeq" id="WP_003014352.1">
    <property type="nucleotide sequence ID" value="NC_009257.1"/>
</dbReference>
<dbReference type="SMR" id="A4IZS2"/>
<dbReference type="GeneID" id="75264249"/>
<dbReference type="KEGG" id="ftw:FTW_1746"/>
<dbReference type="HOGENOM" id="CLU_061015_2_1_6"/>
<dbReference type="GO" id="GO:1990904">
    <property type="term" value="C:ribonucleoprotein complex"/>
    <property type="evidence" value="ECO:0007669"/>
    <property type="project" value="UniProtKB-KW"/>
</dbReference>
<dbReference type="GO" id="GO:0005840">
    <property type="term" value="C:ribosome"/>
    <property type="evidence" value="ECO:0007669"/>
    <property type="project" value="UniProtKB-KW"/>
</dbReference>
<dbReference type="GO" id="GO:0019843">
    <property type="term" value="F:rRNA binding"/>
    <property type="evidence" value="ECO:0007669"/>
    <property type="project" value="UniProtKB-UniRule"/>
</dbReference>
<dbReference type="GO" id="GO:0003735">
    <property type="term" value="F:structural constituent of ribosome"/>
    <property type="evidence" value="ECO:0007669"/>
    <property type="project" value="InterPro"/>
</dbReference>
<dbReference type="GO" id="GO:0000049">
    <property type="term" value="F:tRNA binding"/>
    <property type="evidence" value="ECO:0007669"/>
    <property type="project" value="UniProtKB-UniRule"/>
</dbReference>
<dbReference type="GO" id="GO:0006412">
    <property type="term" value="P:translation"/>
    <property type="evidence" value="ECO:0007669"/>
    <property type="project" value="UniProtKB-UniRule"/>
</dbReference>
<dbReference type="FunFam" id="3.30.1440.10:FF:000001">
    <property type="entry name" value="50S ribosomal protein L5"/>
    <property type="match status" value="1"/>
</dbReference>
<dbReference type="Gene3D" id="3.30.1440.10">
    <property type="match status" value="1"/>
</dbReference>
<dbReference type="HAMAP" id="MF_01333_B">
    <property type="entry name" value="Ribosomal_uL5_B"/>
    <property type="match status" value="1"/>
</dbReference>
<dbReference type="InterPro" id="IPR002132">
    <property type="entry name" value="Ribosomal_uL5"/>
</dbReference>
<dbReference type="InterPro" id="IPR020930">
    <property type="entry name" value="Ribosomal_uL5_bac-type"/>
</dbReference>
<dbReference type="InterPro" id="IPR031309">
    <property type="entry name" value="Ribosomal_uL5_C"/>
</dbReference>
<dbReference type="InterPro" id="IPR020929">
    <property type="entry name" value="Ribosomal_uL5_CS"/>
</dbReference>
<dbReference type="InterPro" id="IPR022803">
    <property type="entry name" value="Ribosomal_uL5_dom_sf"/>
</dbReference>
<dbReference type="InterPro" id="IPR031310">
    <property type="entry name" value="Ribosomal_uL5_N"/>
</dbReference>
<dbReference type="NCBIfam" id="NF000585">
    <property type="entry name" value="PRK00010.1"/>
    <property type="match status" value="1"/>
</dbReference>
<dbReference type="PANTHER" id="PTHR11994">
    <property type="entry name" value="60S RIBOSOMAL PROTEIN L11-RELATED"/>
    <property type="match status" value="1"/>
</dbReference>
<dbReference type="Pfam" id="PF00281">
    <property type="entry name" value="Ribosomal_L5"/>
    <property type="match status" value="1"/>
</dbReference>
<dbReference type="Pfam" id="PF00673">
    <property type="entry name" value="Ribosomal_L5_C"/>
    <property type="match status" value="1"/>
</dbReference>
<dbReference type="PIRSF" id="PIRSF002161">
    <property type="entry name" value="Ribosomal_L5"/>
    <property type="match status" value="1"/>
</dbReference>
<dbReference type="SUPFAM" id="SSF55282">
    <property type="entry name" value="RL5-like"/>
    <property type="match status" value="1"/>
</dbReference>
<dbReference type="PROSITE" id="PS00358">
    <property type="entry name" value="RIBOSOMAL_L5"/>
    <property type="match status" value="1"/>
</dbReference>
<comment type="function">
    <text evidence="1">This is one of the proteins that bind and probably mediate the attachment of the 5S RNA into the large ribosomal subunit, where it forms part of the central protuberance. In the 70S ribosome it contacts protein S13 of the 30S subunit (bridge B1b), connecting the 2 subunits; this bridge is implicated in subunit movement. Contacts the P site tRNA; the 5S rRNA and some of its associated proteins might help stabilize positioning of ribosome-bound tRNAs.</text>
</comment>
<comment type="subunit">
    <text evidence="1">Part of the 50S ribosomal subunit; part of the 5S rRNA/L5/L18/L25 subcomplex. Contacts the 5S rRNA and the P site tRNA. Forms a bridge to the 30S subunit in the 70S ribosome.</text>
</comment>
<comment type="similarity">
    <text evidence="1">Belongs to the universal ribosomal protein uL5 family.</text>
</comment>
<reference key="1">
    <citation type="journal article" date="2007" name="PLoS ONE">
        <title>Complete genomic characterization of a pathogenic A.II strain of Francisella tularensis subspecies tularensis.</title>
        <authorList>
            <person name="Beckstrom-Sternberg S.M."/>
            <person name="Auerbach R.K."/>
            <person name="Godbole S."/>
            <person name="Pearson J.V."/>
            <person name="Beckstrom-Sternberg J.S."/>
            <person name="Deng Z."/>
            <person name="Munk C."/>
            <person name="Kubota K."/>
            <person name="Zhou Y."/>
            <person name="Bruce D."/>
            <person name="Noronha J."/>
            <person name="Scheuermann R.H."/>
            <person name="Wang A."/>
            <person name="Wei X."/>
            <person name="Wang J."/>
            <person name="Hao J."/>
            <person name="Wagner D.M."/>
            <person name="Brettin T.S."/>
            <person name="Brown N."/>
            <person name="Gilna P."/>
            <person name="Keim P.S."/>
        </authorList>
    </citation>
    <scope>NUCLEOTIDE SEQUENCE [LARGE SCALE GENOMIC DNA]</scope>
    <source>
        <strain>WY96-3418</strain>
    </source>
</reference>
<accession>A4IZS2</accession>
<gene>
    <name evidence="1" type="primary">rplE</name>
    <name type="ordered locus">FTW_1746</name>
</gene>
<name>RL5_FRATW</name>
<organism>
    <name type="scientific">Francisella tularensis subsp. tularensis (strain WY96-3418)</name>
    <dbReference type="NCBI Taxonomy" id="418136"/>
    <lineage>
        <taxon>Bacteria</taxon>
        <taxon>Pseudomonadati</taxon>
        <taxon>Pseudomonadota</taxon>
        <taxon>Gammaproteobacteria</taxon>
        <taxon>Thiotrichales</taxon>
        <taxon>Francisellaceae</taxon>
        <taxon>Francisella</taxon>
    </lineage>
</organism>
<keyword id="KW-0687">Ribonucleoprotein</keyword>
<keyword id="KW-0689">Ribosomal protein</keyword>
<keyword id="KW-0694">RNA-binding</keyword>
<keyword id="KW-0699">rRNA-binding</keyword>
<keyword id="KW-0820">tRNA-binding</keyword>
<evidence type="ECO:0000255" key="1">
    <source>
        <dbReference type="HAMAP-Rule" id="MF_01333"/>
    </source>
</evidence>
<evidence type="ECO:0000305" key="2"/>
<proteinExistence type="inferred from homology"/>
<feature type="chain" id="PRO_1000052740" description="Large ribosomal subunit protein uL5">
    <location>
        <begin position="1"/>
        <end position="179"/>
    </location>
</feature>